<evidence type="ECO:0000255" key="1">
    <source>
        <dbReference type="HAMAP-Rule" id="MF_00226"/>
    </source>
</evidence>
<feature type="chain" id="PRO_1000124973" description="Putative competence-damage inducible protein">
    <location>
        <begin position="1"/>
        <end position="411"/>
    </location>
</feature>
<gene>
    <name evidence="1" type="primary">cinA</name>
    <name type="ordered locus">Athe_0985</name>
</gene>
<organism>
    <name type="scientific">Caldicellulosiruptor bescii (strain ATCC BAA-1888 / DSM 6725 / KCTC 15123 / Z-1320)</name>
    <name type="common">Anaerocellum thermophilum</name>
    <dbReference type="NCBI Taxonomy" id="521460"/>
    <lineage>
        <taxon>Bacteria</taxon>
        <taxon>Bacillati</taxon>
        <taxon>Bacillota</taxon>
        <taxon>Bacillota incertae sedis</taxon>
        <taxon>Caldicellulosiruptorales</taxon>
        <taxon>Caldicellulosiruptoraceae</taxon>
        <taxon>Caldicellulosiruptor</taxon>
    </lineage>
</organism>
<dbReference type="EMBL" id="CP001393">
    <property type="protein sequence ID" value="ACM60086.1"/>
    <property type="molecule type" value="Genomic_DNA"/>
</dbReference>
<dbReference type="RefSeq" id="WP_015907503.1">
    <property type="nucleotide sequence ID" value="NC_012034.1"/>
</dbReference>
<dbReference type="SMR" id="B9MQY2"/>
<dbReference type="STRING" id="521460.Athe_0985"/>
<dbReference type="GeneID" id="31772337"/>
<dbReference type="KEGG" id="ate:Athe_0985"/>
<dbReference type="eggNOG" id="COG1058">
    <property type="taxonomic scope" value="Bacteria"/>
</dbReference>
<dbReference type="eggNOG" id="COG1546">
    <property type="taxonomic scope" value="Bacteria"/>
</dbReference>
<dbReference type="HOGENOM" id="CLU_030805_9_3_9"/>
<dbReference type="Proteomes" id="UP000007723">
    <property type="component" value="Chromosome"/>
</dbReference>
<dbReference type="CDD" id="cd00885">
    <property type="entry name" value="cinA"/>
    <property type="match status" value="1"/>
</dbReference>
<dbReference type="Gene3D" id="3.30.70.2860">
    <property type="match status" value="1"/>
</dbReference>
<dbReference type="Gene3D" id="3.90.950.20">
    <property type="entry name" value="CinA-like"/>
    <property type="match status" value="1"/>
</dbReference>
<dbReference type="Gene3D" id="3.40.980.10">
    <property type="entry name" value="MoaB/Mog-like domain"/>
    <property type="match status" value="1"/>
</dbReference>
<dbReference type="HAMAP" id="MF_00226_B">
    <property type="entry name" value="CinA_B"/>
    <property type="match status" value="1"/>
</dbReference>
<dbReference type="InterPro" id="IPR050101">
    <property type="entry name" value="CinA"/>
</dbReference>
<dbReference type="InterPro" id="IPR036653">
    <property type="entry name" value="CinA-like_C"/>
</dbReference>
<dbReference type="InterPro" id="IPR008136">
    <property type="entry name" value="CinA_C"/>
</dbReference>
<dbReference type="InterPro" id="IPR041424">
    <property type="entry name" value="CinA_KH"/>
</dbReference>
<dbReference type="InterPro" id="IPR008135">
    <property type="entry name" value="Competence-induced_CinA"/>
</dbReference>
<dbReference type="InterPro" id="IPR036425">
    <property type="entry name" value="MoaB/Mog-like_dom_sf"/>
</dbReference>
<dbReference type="InterPro" id="IPR001453">
    <property type="entry name" value="MoaB/Mog_dom"/>
</dbReference>
<dbReference type="NCBIfam" id="TIGR00200">
    <property type="entry name" value="cinA_nterm"/>
    <property type="match status" value="1"/>
</dbReference>
<dbReference type="NCBIfam" id="TIGR00177">
    <property type="entry name" value="molyb_syn"/>
    <property type="match status" value="1"/>
</dbReference>
<dbReference type="NCBIfam" id="TIGR00199">
    <property type="entry name" value="PncC_domain"/>
    <property type="match status" value="1"/>
</dbReference>
<dbReference type="NCBIfam" id="NF001813">
    <property type="entry name" value="PRK00549.1"/>
    <property type="match status" value="1"/>
</dbReference>
<dbReference type="PANTHER" id="PTHR13939">
    <property type="entry name" value="NICOTINAMIDE-NUCLEOTIDE AMIDOHYDROLASE PNCC"/>
    <property type="match status" value="1"/>
</dbReference>
<dbReference type="PANTHER" id="PTHR13939:SF0">
    <property type="entry name" value="NMN AMIDOHYDROLASE-LIKE PROTEIN YFAY"/>
    <property type="match status" value="1"/>
</dbReference>
<dbReference type="Pfam" id="PF02464">
    <property type="entry name" value="CinA"/>
    <property type="match status" value="1"/>
</dbReference>
<dbReference type="Pfam" id="PF18146">
    <property type="entry name" value="CinA_KH"/>
    <property type="match status" value="1"/>
</dbReference>
<dbReference type="Pfam" id="PF00994">
    <property type="entry name" value="MoCF_biosynth"/>
    <property type="match status" value="1"/>
</dbReference>
<dbReference type="PIRSF" id="PIRSF006728">
    <property type="entry name" value="CinA"/>
    <property type="match status" value="1"/>
</dbReference>
<dbReference type="SMART" id="SM00852">
    <property type="entry name" value="MoCF_biosynth"/>
    <property type="match status" value="1"/>
</dbReference>
<dbReference type="SUPFAM" id="SSF142433">
    <property type="entry name" value="CinA-like"/>
    <property type="match status" value="1"/>
</dbReference>
<dbReference type="SUPFAM" id="SSF53218">
    <property type="entry name" value="Molybdenum cofactor biosynthesis proteins"/>
    <property type="match status" value="1"/>
</dbReference>
<name>CINA_CALBD</name>
<reference key="1">
    <citation type="submission" date="2009-01" db="EMBL/GenBank/DDBJ databases">
        <title>Complete sequence of chromosome of Caldicellulosiruptor becscii DSM 6725.</title>
        <authorList>
            <person name="Lucas S."/>
            <person name="Copeland A."/>
            <person name="Lapidus A."/>
            <person name="Glavina del Rio T."/>
            <person name="Tice H."/>
            <person name="Bruce D."/>
            <person name="Goodwin L."/>
            <person name="Pitluck S."/>
            <person name="Sims D."/>
            <person name="Meincke L."/>
            <person name="Brettin T."/>
            <person name="Detter J.C."/>
            <person name="Han C."/>
            <person name="Larimer F."/>
            <person name="Land M."/>
            <person name="Hauser L."/>
            <person name="Kyrpides N."/>
            <person name="Ovchinnikova G."/>
            <person name="Kataeva I."/>
            <person name="Adams M.W.W."/>
        </authorList>
    </citation>
    <scope>NUCLEOTIDE SEQUENCE [LARGE SCALE GENOMIC DNA]</scope>
    <source>
        <strain>ATCC BAA-1888 / DSM 6725 / KCTC 15123 / Z-1320</strain>
    </source>
</reference>
<proteinExistence type="inferred from homology"/>
<comment type="similarity">
    <text evidence="1">Belongs to the CinA family.</text>
</comment>
<protein>
    <recommendedName>
        <fullName evidence="1">Putative competence-damage inducible protein</fullName>
    </recommendedName>
</protein>
<accession>B9MQY2</accession>
<sequence>MVAEIICVGTELLLGQILNTNSQYLAQKLAELGIDLYFQTTVGDNMERLKMAIDIATKRSDVLIFTGGLGPTSDDITKEAVADYFGLTLVLDEDILRRIESFFERRQVKMPQINKKQAYVPEGAKVLHNKNGTAPGLIIEKDGKIAILLPGPPFEMQPMFEEEVLPYLEKFSKQKIYSRVLKFIGIGESSIEEALKDLILSQTDPTMALYAKPFEVELRITTKKESEELAKSLLQSMEYRIRERLGEYIYGVDRQLLEEVVIGLLTEKKLKVSVAESCTGGLICNKLTNVPGASEVFDRGFIVYSNEAKMKLLGVPEQVLKEHGAVSSQTARFMAQGALSNSLSDIALSVTGIAGPGGGSETKPVGLVYIGIATKDNVESFEFRFSGDRLRIKEMTSKAALNILRKKIIDY</sequence>